<protein>
    <recommendedName>
        <fullName>Exodeoxyribonuclease 1</fullName>
        <ecNumber>3.1.-.-</ecNumber>
    </recommendedName>
    <alternativeName>
        <fullName>Exodeoxyribonuclease I</fullName>
        <shortName>EXO I</shortName>
        <shortName>Exonuclease I</shortName>
    </alternativeName>
</protein>
<keyword id="KW-0903">Direct protein sequencing</keyword>
<keyword id="KW-0227">DNA damage</keyword>
<keyword id="KW-0234">DNA repair</keyword>
<keyword id="KW-0238">DNA-binding</keyword>
<keyword id="KW-0267">Excision nuclease</keyword>
<keyword id="KW-0269">Exonuclease</keyword>
<keyword id="KW-0378">Hydrolase</keyword>
<keyword id="KW-0460">Magnesium</keyword>
<keyword id="KW-0479">Metal-binding</keyword>
<keyword id="KW-0540">Nuclease</keyword>
<keyword id="KW-0539">Nucleus</keyword>
<keyword id="KW-1185">Reference proteome</keyword>
<evidence type="ECO:0000250" key="1"/>
<evidence type="ECO:0000256" key="2">
    <source>
        <dbReference type="SAM" id="MobiDB-lite"/>
    </source>
</evidence>
<evidence type="ECO:0000269" key="3">
    <source>
    </source>
</evidence>
<evidence type="ECO:0000305" key="4"/>
<gene>
    <name type="primary">exo1</name>
    <name type="ORF">SPBC29A10.05</name>
</gene>
<sequence length="571" mass="63867">MGIKGLLGLLKPMQKSSHVEEFSGKTLGVDGYVWLHKAVFTCAHELAFNKETDKYLKYAIHQALMLQYYGVKPLIVFDGGPLPCKASTEQKRKERRQEAFELGKKLWDEGKKSQAIMQFSRCVDVTPEMAWKLIIALREHGIESIVAPYEADAQLVYLEKENIIDGIITEDSDMLVFGAQTVLFKMDGFGNCITIRRNDIANAQDLNLRLPIEKLRHMAIFSGCDYTDGVAGMGLKTALRYLQKYPEPRAAIRAMRLDKSLKVPVSFEKEFALADLAFRHQRVYCPKDKTLVHLSPPERELSVHEDAFIGSFFDNQLAIDIAEGRSNPITKCAFDIKDSSMQSFTKTTITISKRKGISKTDISNFFMKSIPPSKRPTKSTSLIDVTNVKVQRTHLANDISSEKQSIKSANEKAYVTPKSNSLKPGFGKSLSDISNSATKNENVPFLPPRTGVSKYFKLQKNTEKEIDEQVPSQSNNTTPTSAKSDSASPQNWFSSFSYQTPNSASPPFSSLSHTLPISALAKIGHDALNRKNHASLPSRRIVYKPPSSPSTPISMNPRPKGILSLQQYKFR</sequence>
<dbReference type="EC" id="3.1.-.-"/>
<dbReference type="EMBL" id="L35174">
    <property type="protein sequence ID" value="AAC41648.1"/>
    <property type="molecule type" value="Genomic_DNA"/>
</dbReference>
<dbReference type="EMBL" id="CU329671">
    <property type="protein sequence ID" value="CAA22433.1"/>
    <property type="molecule type" value="Genomic_DNA"/>
</dbReference>
<dbReference type="PIR" id="T43288">
    <property type="entry name" value="T43288"/>
</dbReference>
<dbReference type="RefSeq" id="NP_596050.1">
    <property type="nucleotide sequence ID" value="NM_001021961.2"/>
</dbReference>
<dbReference type="SMR" id="P53695"/>
<dbReference type="BioGRID" id="276877">
    <property type="interactions" value="90"/>
</dbReference>
<dbReference type="FunCoup" id="P53695">
    <property type="interactions" value="381"/>
</dbReference>
<dbReference type="STRING" id="284812.P53695"/>
<dbReference type="iPTMnet" id="P53695"/>
<dbReference type="PaxDb" id="4896-SPBC29A10.05.1"/>
<dbReference type="EnsemblFungi" id="SPBC29A10.05.1">
    <property type="protein sequence ID" value="SPBC29A10.05.1:pep"/>
    <property type="gene ID" value="SPBC29A10.05"/>
</dbReference>
<dbReference type="GeneID" id="2540348"/>
<dbReference type="KEGG" id="spo:2540348"/>
<dbReference type="PomBase" id="SPBC29A10.05">
    <property type="gene designation" value="exo1"/>
</dbReference>
<dbReference type="VEuPathDB" id="FungiDB:SPBC29A10.05"/>
<dbReference type="eggNOG" id="KOG2518">
    <property type="taxonomic scope" value="Eukaryota"/>
</dbReference>
<dbReference type="HOGENOM" id="CLU_008978_5_1_1"/>
<dbReference type="InParanoid" id="P53695"/>
<dbReference type="OMA" id="CKAPTEQ"/>
<dbReference type="PhylomeDB" id="P53695"/>
<dbReference type="Reactome" id="R-SPO-5358565">
    <property type="pathway name" value="Mismatch repair (MMR) directed by MSH2:MSH6 (MutSalpha)"/>
</dbReference>
<dbReference type="PRO" id="PR:P53695"/>
<dbReference type="Proteomes" id="UP000002485">
    <property type="component" value="Chromosome II"/>
</dbReference>
<dbReference type="GO" id="GO:0072686">
    <property type="term" value="C:mitotic spindle"/>
    <property type="evidence" value="ECO:0007005"/>
    <property type="project" value="PomBase"/>
</dbReference>
<dbReference type="GO" id="GO:0005634">
    <property type="term" value="C:nucleus"/>
    <property type="evidence" value="ECO:0007005"/>
    <property type="project" value="PomBase"/>
</dbReference>
<dbReference type="GO" id="GO:0035861">
    <property type="term" value="C:site of double-strand break"/>
    <property type="evidence" value="ECO:0000314"/>
    <property type="project" value="PomBase"/>
</dbReference>
<dbReference type="GO" id="GO:0035312">
    <property type="term" value="F:5'-3' DNA exonuclease activity"/>
    <property type="evidence" value="ECO:0000318"/>
    <property type="project" value="GO_Central"/>
</dbReference>
<dbReference type="GO" id="GO:0017108">
    <property type="term" value="F:5'-flap endonuclease activity"/>
    <property type="evidence" value="ECO:0000318"/>
    <property type="project" value="GO_Central"/>
</dbReference>
<dbReference type="GO" id="GO:0051908">
    <property type="term" value="F:double-stranded DNA 5'-3' DNA exonuclease activity"/>
    <property type="evidence" value="ECO:0000314"/>
    <property type="project" value="PomBase"/>
</dbReference>
<dbReference type="GO" id="GO:0003690">
    <property type="term" value="F:double-stranded DNA binding"/>
    <property type="evidence" value="ECO:0000314"/>
    <property type="project" value="PomBase"/>
</dbReference>
<dbReference type="GO" id="GO:0046872">
    <property type="term" value="F:metal ion binding"/>
    <property type="evidence" value="ECO:0007669"/>
    <property type="project" value="UniProtKB-KW"/>
</dbReference>
<dbReference type="GO" id="GO:0000729">
    <property type="term" value="P:DNA double-strand break processing"/>
    <property type="evidence" value="ECO:0000315"/>
    <property type="project" value="PomBase"/>
</dbReference>
<dbReference type="GO" id="GO:0006310">
    <property type="term" value="P:DNA recombination"/>
    <property type="evidence" value="ECO:0000318"/>
    <property type="project" value="GO_Central"/>
</dbReference>
<dbReference type="GO" id="GO:0000724">
    <property type="term" value="P:double-strand break repair via homologous recombination"/>
    <property type="evidence" value="ECO:0000304"/>
    <property type="project" value="PomBase"/>
</dbReference>
<dbReference type="GO" id="GO:0043570">
    <property type="term" value="P:maintenance of DNA repeat elements"/>
    <property type="evidence" value="ECO:0000315"/>
    <property type="project" value="PomBase"/>
</dbReference>
<dbReference type="GO" id="GO:0000706">
    <property type="term" value="P:meiotic DNA double-strand break processing"/>
    <property type="evidence" value="ECO:0000304"/>
    <property type="project" value="PomBase"/>
</dbReference>
<dbReference type="GO" id="GO:0000710">
    <property type="term" value="P:meiotic mismatch repair"/>
    <property type="evidence" value="ECO:0000315"/>
    <property type="project" value="PomBase"/>
</dbReference>
<dbReference type="GO" id="GO:0006298">
    <property type="term" value="P:mismatch repair"/>
    <property type="evidence" value="ECO:0000316"/>
    <property type="project" value="PomBase"/>
</dbReference>
<dbReference type="GO" id="GO:0006312">
    <property type="term" value="P:mitotic recombination"/>
    <property type="evidence" value="ECO:0000304"/>
    <property type="project" value="PomBase"/>
</dbReference>
<dbReference type="GO" id="GO:1990426">
    <property type="term" value="P:mitotic recombination-dependent replication fork processing"/>
    <property type="evidence" value="ECO:0000315"/>
    <property type="project" value="PomBase"/>
</dbReference>
<dbReference type="GO" id="GO:0031297">
    <property type="term" value="P:replication fork processing"/>
    <property type="evidence" value="ECO:0000315"/>
    <property type="project" value="PomBase"/>
</dbReference>
<dbReference type="GO" id="GO:0000723">
    <property type="term" value="P:telomere maintenance"/>
    <property type="evidence" value="ECO:0000304"/>
    <property type="project" value="PomBase"/>
</dbReference>
<dbReference type="CDD" id="cd09908">
    <property type="entry name" value="H3TH_EXO1"/>
    <property type="match status" value="1"/>
</dbReference>
<dbReference type="CDD" id="cd09857">
    <property type="entry name" value="PIN_EXO1"/>
    <property type="match status" value="1"/>
</dbReference>
<dbReference type="FunFam" id="1.10.150.20:FF:000011">
    <property type="entry name" value="exonuclease 1"/>
    <property type="match status" value="1"/>
</dbReference>
<dbReference type="FunFam" id="3.40.50.1010:FF:000002">
    <property type="entry name" value="Exonuclease 1, putative"/>
    <property type="match status" value="1"/>
</dbReference>
<dbReference type="Gene3D" id="1.10.150.20">
    <property type="entry name" value="5' to 3' exonuclease, C-terminal subdomain"/>
    <property type="match status" value="1"/>
</dbReference>
<dbReference type="Gene3D" id="3.40.50.1010">
    <property type="entry name" value="5'-nuclease"/>
    <property type="match status" value="1"/>
</dbReference>
<dbReference type="InterPro" id="IPR036279">
    <property type="entry name" value="5-3_exonuclease_C_sf"/>
</dbReference>
<dbReference type="InterPro" id="IPR037315">
    <property type="entry name" value="EXO1_H3TH"/>
</dbReference>
<dbReference type="InterPro" id="IPR008918">
    <property type="entry name" value="HhH2"/>
</dbReference>
<dbReference type="InterPro" id="IPR029060">
    <property type="entry name" value="PIN-like_dom_sf"/>
</dbReference>
<dbReference type="InterPro" id="IPR044752">
    <property type="entry name" value="PIN-like_EXO1"/>
</dbReference>
<dbReference type="InterPro" id="IPR006086">
    <property type="entry name" value="XPG-I_dom"/>
</dbReference>
<dbReference type="InterPro" id="IPR006084">
    <property type="entry name" value="XPG/Rad2"/>
</dbReference>
<dbReference type="InterPro" id="IPR019974">
    <property type="entry name" value="XPG_CS"/>
</dbReference>
<dbReference type="InterPro" id="IPR006085">
    <property type="entry name" value="XPG_DNA_repair_N"/>
</dbReference>
<dbReference type="PANTHER" id="PTHR11081:SF8">
    <property type="entry name" value="EXONUCLEASE 1"/>
    <property type="match status" value="1"/>
</dbReference>
<dbReference type="PANTHER" id="PTHR11081">
    <property type="entry name" value="FLAP ENDONUCLEASE FAMILY MEMBER"/>
    <property type="match status" value="1"/>
</dbReference>
<dbReference type="Pfam" id="PF00867">
    <property type="entry name" value="XPG_I"/>
    <property type="match status" value="1"/>
</dbReference>
<dbReference type="Pfam" id="PF00752">
    <property type="entry name" value="XPG_N"/>
    <property type="match status" value="1"/>
</dbReference>
<dbReference type="PRINTS" id="PR00853">
    <property type="entry name" value="XPGRADSUPER"/>
</dbReference>
<dbReference type="SMART" id="SM00279">
    <property type="entry name" value="HhH2"/>
    <property type="match status" value="1"/>
</dbReference>
<dbReference type="SMART" id="SM00484">
    <property type="entry name" value="XPGI"/>
    <property type="match status" value="1"/>
</dbReference>
<dbReference type="SMART" id="SM00485">
    <property type="entry name" value="XPGN"/>
    <property type="match status" value="1"/>
</dbReference>
<dbReference type="SUPFAM" id="SSF47807">
    <property type="entry name" value="5' to 3' exonuclease, C-terminal subdomain"/>
    <property type="match status" value="1"/>
</dbReference>
<dbReference type="SUPFAM" id="SSF88723">
    <property type="entry name" value="PIN domain-like"/>
    <property type="match status" value="1"/>
</dbReference>
<dbReference type="PROSITE" id="PS00841">
    <property type="entry name" value="XPG_1"/>
    <property type="match status" value="1"/>
</dbReference>
<dbReference type="PROSITE" id="PS00842">
    <property type="entry name" value="XPG_2"/>
    <property type="match status" value="1"/>
</dbReference>
<accession>P53695</accession>
<name>EXO1_SCHPO</name>
<proteinExistence type="evidence at protein level"/>
<feature type="chain" id="PRO_0000154044" description="Exodeoxyribonuclease 1">
    <location>
        <begin position="1"/>
        <end position="571"/>
    </location>
</feature>
<feature type="region of interest" description="N-domain">
    <location>
        <begin position="1"/>
        <end position="96"/>
    </location>
</feature>
<feature type="region of interest" description="I-domain">
    <location>
        <begin position="114"/>
        <end position="245"/>
    </location>
</feature>
<feature type="region of interest" description="Disordered" evidence="2">
    <location>
        <begin position="464"/>
        <end position="489"/>
    </location>
</feature>
<feature type="region of interest" description="Disordered" evidence="2">
    <location>
        <begin position="530"/>
        <end position="559"/>
    </location>
</feature>
<feature type="compositionally biased region" description="Polar residues" evidence="2">
    <location>
        <begin position="470"/>
        <end position="489"/>
    </location>
</feature>
<feature type="binding site" evidence="1">
    <location>
        <position position="30"/>
    </location>
    <ligand>
        <name>Mg(2+)</name>
        <dbReference type="ChEBI" id="CHEBI:18420"/>
        <label>1</label>
    </ligand>
</feature>
<feature type="binding site" evidence="1">
    <location>
        <position position="78"/>
    </location>
    <ligand>
        <name>Mg(2+)</name>
        <dbReference type="ChEBI" id="CHEBI:18420"/>
        <label>1</label>
    </ligand>
</feature>
<feature type="binding site" evidence="1">
    <location>
        <position position="150"/>
    </location>
    <ligand>
        <name>Mg(2+)</name>
        <dbReference type="ChEBI" id="CHEBI:18420"/>
        <label>1</label>
    </ligand>
</feature>
<feature type="binding site" evidence="1">
    <location>
        <position position="152"/>
    </location>
    <ligand>
        <name>Mg(2+)</name>
        <dbReference type="ChEBI" id="CHEBI:18420"/>
        <label>1</label>
    </ligand>
</feature>
<feature type="binding site" evidence="1">
    <location>
        <position position="171"/>
    </location>
    <ligand>
        <name>Mg(2+)</name>
        <dbReference type="ChEBI" id="CHEBI:18420"/>
        <label>2</label>
    </ligand>
</feature>
<feature type="binding site" evidence="1">
    <location>
        <position position="173"/>
    </location>
    <ligand>
        <name>Mg(2+)</name>
        <dbReference type="ChEBI" id="CHEBI:18420"/>
        <label>2</label>
    </ligand>
</feature>
<feature type="binding site" evidence="1">
    <location>
        <position position="225"/>
    </location>
    <ligand>
        <name>Mg(2+)</name>
        <dbReference type="ChEBI" id="CHEBI:18420"/>
        <label>2</label>
    </ligand>
</feature>
<comment type="function">
    <text evidence="3">5'-&gt;3' double-stranded DNA exonuclease that could act in a pathway that corrects mismatched base pairs.</text>
</comment>
<comment type="cofactor">
    <cofactor evidence="1">
        <name>Mg(2+)</name>
        <dbReference type="ChEBI" id="CHEBI:18420"/>
    </cofactor>
    <text evidence="1">Binds 2 magnesium ions per subunit. They probably participate in the reaction catalyzed by the enzyme. May bind an additional third magnesium ion after substrate binding.</text>
</comment>
<comment type="subunit">
    <text evidence="3">Monomer.</text>
</comment>
<comment type="subcellular location">
    <subcellularLocation>
        <location evidence="4">Nucleus</location>
    </subcellularLocation>
</comment>
<comment type="induction">
    <text>By meiosis.</text>
</comment>
<comment type="similarity">
    <text evidence="4">Belongs to the XPG/RAD2 endonuclease family. EXO1 subfamily.</text>
</comment>
<reference key="1">
    <citation type="journal article" date="1995" name="Science">
        <title>A role for exonuclease I from S. pombe in mutation avoidance and mismatch correction.</title>
        <authorList>
            <person name="Szankasi P."/>
            <person name="Smith G.R."/>
        </authorList>
    </citation>
    <scope>NUCLEOTIDE SEQUENCE [GENOMIC DNA]</scope>
    <scope>PROTEIN SEQUENCE OF 139-160</scope>
    <source>
        <strain>972 / ATCC 24843</strain>
    </source>
</reference>
<reference key="2">
    <citation type="journal article" date="2002" name="Nature">
        <title>The genome sequence of Schizosaccharomyces pombe.</title>
        <authorList>
            <person name="Wood V."/>
            <person name="Gwilliam R."/>
            <person name="Rajandream M.A."/>
            <person name="Lyne M.H."/>
            <person name="Lyne R."/>
            <person name="Stewart A."/>
            <person name="Sgouros J.G."/>
            <person name="Peat N."/>
            <person name="Hayles J."/>
            <person name="Baker S.G."/>
            <person name="Basham D."/>
            <person name="Bowman S."/>
            <person name="Brooks K."/>
            <person name="Brown D."/>
            <person name="Brown S."/>
            <person name="Chillingworth T."/>
            <person name="Churcher C.M."/>
            <person name="Collins M."/>
            <person name="Connor R."/>
            <person name="Cronin A."/>
            <person name="Davis P."/>
            <person name="Feltwell T."/>
            <person name="Fraser A."/>
            <person name="Gentles S."/>
            <person name="Goble A."/>
            <person name="Hamlin N."/>
            <person name="Harris D.E."/>
            <person name="Hidalgo J."/>
            <person name="Hodgson G."/>
            <person name="Holroyd S."/>
            <person name="Hornsby T."/>
            <person name="Howarth S."/>
            <person name="Huckle E.J."/>
            <person name="Hunt S."/>
            <person name="Jagels K."/>
            <person name="James K.D."/>
            <person name="Jones L."/>
            <person name="Jones M."/>
            <person name="Leather S."/>
            <person name="McDonald S."/>
            <person name="McLean J."/>
            <person name="Mooney P."/>
            <person name="Moule S."/>
            <person name="Mungall K.L."/>
            <person name="Murphy L.D."/>
            <person name="Niblett D."/>
            <person name="Odell C."/>
            <person name="Oliver K."/>
            <person name="O'Neil S."/>
            <person name="Pearson D."/>
            <person name="Quail M.A."/>
            <person name="Rabbinowitsch E."/>
            <person name="Rutherford K.M."/>
            <person name="Rutter S."/>
            <person name="Saunders D."/>
            <person name="Seeger K."/>
            <person name="Sharp S."/>
            <person name="Skelton J."/>
            <person name="Simmonds M.N."/>
            <person name="Squares R."/>
            <person name="Squares S."/>
            <person name="Stevens K."/>
            <person name="Taylor K."/>
            <person name="Taylor R.G."/>
            <person name="Tivey A."/>
            <person name="Walsh S.V."/>
            <person name="Warren T."/>
            <person name="Whitehead S."/>
            <person name="Woodward J.R."/>
            <person name="Volckaert G."/>
            <person name="Aert R."/>
            <person name="Robben J."/>
            <person name="Grymonprez B."/>
            <person name="Weltjens I."/>
            <person name="Vanstreels E."/>
            <person name="Rieger M."/>
            <person name="Schaefer M."/>
            <person name="Mueller-Auer S."/>
            <person name="Gabel C."/>
            <person name="Fuchs M."/>
            <person name="Duesterhoeft A."/>
            <person name="Fritzc C."/>
            <person name="Holzer E."/>
            <person name="Moestl D."/>
            <person name="Hilbert H."/>
            <person name="Borzym K."/>
            <person name="Langer I."/>
            <person name="Beck A."/>
            <person name="Lehrach H."/>
            <person name="Reinhardt R."/>
            <person name="Pohl T.M."/>
            <person name="Eger P."/>
            <person name="Zimmermann W."/>
            <person name="Wedler H."/>
            <person name="Wambutt R."/>
            <person name="Purnelle B."/>
            <person name="Goffeau A."/>
            <person name="Cadieu E."/>
            <person name="Dreano S."/>
            <person name="Gloux S."/>
            <person name="Lelaure V."/>
            <person name="Mottier S."/>
            <person name="Galibert F."/>
            <person name="Aves S.J."/>
            <person name="Xiang Z."/>
            <person name="Hunt C."/>
            <person name="Moore K."/>
            <person name="Hurst S.M."/>
            <person name="Lucas M."/>
            <person name="Rochet M."/>
            <person name="Gaillardin C."/>
            <person name="Tallada V.A."/>
            <person name="Garzon A."/>
            <person name="Thode G."/>
            <person name="Daga R.R."/>
            <person name="Cruzado L."/>
            <person name="Jimenez J."/>
            <person name="Sanchez M."/>
            <person name="del Rey F."/>
            <person name="Benito J."/>
            <person name="Dominguez A."/>
            <person name="Revuelta J.L."/>
            <person name="Moreno S."/>
            <person name="Armstrong J."/>
            <person name="Forsburg S.L."/>
            <person name="Cerutti L."/>
            <person name="Lowe T."/>
            <person name="McCombie W.R."/>
            <person name="Paulsen I."/>
            <person name="Potashkin J."/>
            <person name="Shpakovski G.V."/>
            <person name="Ussery D."/>
            <person name="Barrell B.G."/>
            <person name="Nurse P."/>
        </authorList>
    </citation>
    <scope>NUCLEOTIDE SEQUENCE [LARGE SCALE GENOMIC DNA]</scope>
    <source>
        <strain>972 / ATCC 24843</strain>
    </source>
</reference>
<reference key="3">
    <citation type="journal article" date="1992" name="J. Biol. Chem.">
        <title>A DNA exonuclease induced during meiosis of Schizosaccharomyces pombe.</title>
        <authorList>
            <person name="Szankasi P."/>
            <person name="Smith G.R."/>
        </authorList>
    </citation>
    <scope>FUNCTION</scope>
    <scope>SUBUNIT</scope>
</reference>
<organism>
    <name type="scientific">Schizosaccharomyces pombe (strain 972 / ATCC 24843)</name>
    <name type="common">Fission yeast</name>
    <dbReference type="NCBI Taxonomy" id="284812"/>
    <lineage>
        <taxon>Eukaryota</taxon>
        <taxon>Fungi</taxon>
        <taxon>Dikarya</taxon>
        <taxon>Ascomycota</taxon>
        <taxon>Taphrinomycotina</taxon>
        <taxon>Schizosaccharomycetes</taxon>
        <taxon>Schizosaccharomycetales</taxon>
        <taxon>Schizosaccharomycetaceae</taxon>
        <taxon>Schizosaccharomyces</taxon>
    </lineage>
</organism>